<accession>B8ZLH4</accession>
<reference key="1">
    <citation type="journal article" date="2009" name="J. Bacteriol.">
        <title>Role of conjugative elements in the evolution of the multidrug-resistant pandemic clone Streptococcus pneumoniae Spain23F ST81.</title>
        <authorList>
            <person name="Croucher N.J."/>
            <person name="Walker D."/>
            <person name="Romero P."/>
            <person name="Lennard N."/>
            <person name="Paterson G.K."/>
            <person name="Bason N.C."/>
            <person name="Mitchell A.M."/>
            <person name="Quail M.A."/>
            <person name="Andrew P.W."/>
            <person name="Parkhill J."/>
            <person name="Bentley S.D."/>
            <person name="Mitchell T.J."/>
        </authorList>
    </citation>
    <scope>NUCLEOTIDE SEQUENCE [LARGE SCALE GENOMIC DNA]</scope>
    <source>
        <strain>ATCC 700669 / Spain 23F-1</strain>
    </source>
</reference>
<organism>
    <name type="scientific">Streptococcus pneumoniae (strain ATCC 700669 / Spain 23F-1)</name>
    <dbReference type="NCBI Taxonomy" id="561276"/>
    <lineage>
        <taxon>Bacteria</taxon>
        <taxon>Bacillati</taxon>
        <taxon>Bacillota</taxon>
        <taxon>Bacilli</taxon>
        <taxon>Lactobacillales</taxon>
        <taxon>Streptococcaceae</taxon>
        <taxon>Streptococcus</taxon>
    </lineage>
</organism>
<dbReference type="EC" id="3.1.-.-" evidence="1"/>
<dbReference type="EC" id="3.6.4.-" evidence="1"/>
<dbReference type="EMBL" id="FM211187">
    <property type="protein sequence ID" value="CAR68232.1"/>
    <property type="molecule type" value="Genomic_DNA"/>
</dbReference>
<dbReference type="RefSeq" id="WP_001035036.1">
    <property type="nucleotide sequence ID" value="NC_011900.1"/>
</dbReference>
<dbReference type="SMR" id="B8ZLH4"/>
<dbReference type="KEGG" id="sne:SPN23F03830"/>
<dbReference type="HOGENOM" id="CLU_011252_2_1_9"/>
<dbReference type="GO" id="GO:0005524">
    <property type="term" value="F:ATP binding"/>
    <property type="evidence" value="ECO:0007669"/>
    <property type="project" value="UniProtKB-UniRule"/>
</dbReference>
<dbReference type="GO" id="GO:0016887">
    <property type="term" value="F:ATP hydrolysis activity"/>
    <property type="evidence" value="ECO:0007669"/>
    <property type="project" value="InterPro"/>
</dbReference>
<dbReference type="GO" id="GO:0140664">
    <property type="term" value="F:ATP-dependent DNA damage sensor activity"/>
    <property type="evidence" value="ECO:0007669"/>
    <property type="project" value="InterPro"/>
</dbReference>
<dbReference type="GO" id="GO:0004519">
    <property type="term" value="F:endonuclease activity"/>
    <property type="evidence" value="ECO:0007669"/>
    <property type="project" value="UniProtKB-UniRule"/>
</dbReference>
<dbReference type="GO" id="GO:0030983">
    <property type="term" value="F:mismatched DNA binding"/>
    <property type="evidence" value="ECO:0007669"/>
    <property type="project" value="InterPro"/>
</dbReference>
<dbReference type="GO" id="GO:0043023">
    <property type="term" value="F:ribosomal large subunit binding"/>
    <property type="evidence" value="ECO:0007669"/>
    <property type="project" value="UniProtKB-UniRule"/>
</dbReference>
<dbReference type="GO" id="GO:0019843">
    <property type="term" value="F:rRNA binding"/>
    <property type="evidence" value="ECO:0007669"/>
    <property type="project" value="UniProtKB-UniRule"/>
</dbReference>
<dbReference type="GO" id="GO:0006298">
    <property type="term" value="P:mismatch repair"/>
    <property type="evidence" value="ECO:0007669"/>
    <property type="project" value="InterPro"/>
</dbReference>
<dbReference type="GO" id="GO:0045910">
    <property type="term" value="P:negative regulation of DNA recombination"/>
    <property type="evidence" value="ECO:0007669"/>
    <property type="project" value="InterPro"/>
</dbReference>
<dbReference type="GO" id="GO:0072344">
    <property type="term" value="P:rescue of stalled ribosome"/>
    <property type="evidence" value="ECO:0007669"/>
    <property type="project" value="UniProtKB-UniRule"/>
</dbReference>
<dbReference type="FunFam" id="3.30.1370.110:FF:000005">
    <property type="entry name" value="Endonuclease MutS2"/>
    <property type="match status" value="1"/>
</dbReference>
<dbReference type="FunFam" id="3.40.50.300:FF:000830">
    <property type="entry name" value="Endonuclease MutS2"/>
    <property type="match status" value="1"/>
</dbReference>
<dbReference type="Gene3D" id="3.30.1370.110">
    <property type="match status" value="1"/>
</dbReference>
<dbReference type="Gene3D" id="3.40.50.300">
    <property type="entry name" value="P-loop containing nucleotide triphosphate hydrolases"/>
    <property type="match status" value="1"/>
</dbReference>
<dbReference type="HAMAP" id="MF_00092">
    <property type="entry name" value="MutS2"/>
    <property type="match status" value="1"/>
</dbReference>
<dbReference type="InterPro" id="IPR000432">
    <property type="entry name" value="DNA_mismatch_repair_MutS_C"/>
</dbReference>
<dbReference type="InterPro" id="IPR007696">
    <property type="entry name" value="DNA_mismatch_repair_MutS_core"/>
</dbReference>
<dbReference type="InterPro" id="IPR036187">
    <property type="entry name" value="DNA_mismatch_repair_MutS_sf"/>
</dbReference>
<dbReference type="InterPro" id="IPR046893">
    <property type="entry name" value="MSSS"/>
</dbReference>
<dbReference type="InterPro" id="IPR045076">
    <property type="entry name" value="MutS"/>
</dbReference>
<dbReference type="InterPro" id="IPR005747">
    <property type="entry name" value="MutS2"/>
</dbReference>
<dbReference type="InterPro" id="IPR027417">
    <property type="entry name" value="P-loop_NTPase"/>
</dbReference>
<dbReference type="InterPro" id="IPR002625">
    <property type="entry name" value="Smr_dom"/>
</dbReference>
<dbReference type="InterPro" id="IPR036063">
    <property type="entry name" value="Smr_dom_sf"/>
</dbReference>
<dbReference type="NCBIfam" id="TIGR01069">
    <property type="entry name" value="mutS2"/>
    <property type="match status" value="1"/>
</dbReference>
<dbReference type="PANTHER" id="PTHR48466">
    <property type="entry name" value="OS10G0509000 PROTEIN-RELATED"/>
    <property type="match status" value="1"/>
</dbReference>
<dbReference type="PANTHER" id="PTHR48466:SF1">
    <property type="entry name" value="SMR DOMAIN-CONTAINING PROTEIN"/>
    <property type="match status" value="1"/>
</dbReference>
<dbReference type="Pfam" id="PF20297">
    <property type="entry name" value="MSSS"/>
    <property type="match status" value="1"/>
</dbReference>
<dbReference type="Pfam" id="PF00488">
    <property type="entry name" value="MutS_V"/>
    <property type="match status" value="1"/>
</dbReference>
<dbReference type="Pfam" id="PF01713">
    <property type="entry name" value="Smr"/>
    <property type="match status" value="1"/>
</dbReference>
<dbReference type="PIRSF" id="PIRSF005814">
    <property type="entry name" value="MutS_YshD"/>
    <property type="match status" value="1"/>
</dbReference>
<dbReference type="SMART" id="SM00534">
    <property type="entry name" value="MUTSac"/>
    <property type="match status" value="1"/>
</dbReference>
<dbReference type="SMART" id="SM00533">
    <property type="entry name" value="MUTSd"/>
    <property type="match status" value="1"/>
</dbReference>
<dbReference type="SMART" id="SM00463">
    <property type="entry name" value="SMR"/>
    <property type="match status" value="1"/>
</dbReference>
<dbReference type="SUPFAM" id="SSF48334">
    <property type="entry name" value="DNA repair protein MutS, domain III"/>
    <property type="match status" value="1"/>
</dbReference>
<dbReference type="SUPFAM" id="SSF52540">
    <property type="entry name" value="P-loop containing nucleoside triphosphate hydrolases"/>
    <property type="match status" value="1"/>
</dbReference>
<dbReference type="SUPFAM" id="SSF160443">
    <property type="entry name" value="SMR domain-like"/>
    <property type="match status" value="1"/>
</dbReference>
<dbReference type="PROSITE" id="PS00486">
    <property type="entry name" value="DNA_MISMATCH_REPAIR_2"/>
    <property type="match status" value="1"/>
</dbReference>
<dbReference type="PROSITE" id="PS50828">
    <property type="entry name" value="SMR"/>
    <property type="match status" value="1"/>
</dbReference>
<evidence type="ECO:0000255" key="1">
    <source>
        <dbReference type="HAMAP-Rule" id="MF_00092"/>
    </source>
</evidence>
<proteinExistence type="inferred from homology"/>
<gene>
    <name evidence="1" type="primary">mutS2</name>
    <name evidence="1" type="synonym">rqcU</name>
    <name type="ordered locus">SPN23F03830</name>
</gene>
<protein>
    <recommendedName>
        <fullName evidence="1">Endonuclease MutS2</fullName>
        <ecNumber evidence="1">3.1.-.-</ecNumber>
    </recommendedName>
    <alternativeName>
        <fullName evidence="1">Ribosome-associated protein quality control-upstream factor</fullName>
        <shortName evidence="1">RQC-upstream factor</shortName>
        <shortName evidence="1">RqcU</shortName>
        <ecNumber evidence="1">3.6.4.-</ecNumber>
    </alternativeName>
</protein>
<name>MUTS2_STRPJ</name>
<comment type="function">
    <text evidence="1">Endonuclease that is involved in the suppression of homologous recombination and thus may have a key role in the control of bacterial genetic diversity.</text>
</comment>
<comment type="function">
    <text evidence="1">Acts as a ribosome collision sensor, splitting the ribosome into its 2 subunits. Detects stalled/collided 70S ribosomes which it binds and splits by an ATP-hydrolysis driven conformational change. Acts upstream of the ribosome quality control system (RQC), a ribosome-associated complex that mediates the extraction of incompletely synthesized nascent chains from stalled ribosomes and their subsequent degradation. Probably generates substrates for RQC.</text>
</comment>
<comment type="subunit">
    <text evidence="1">Homodimer. Binds to stalled ribosomes, contacting rRNA.</text>
</comment>
<comment type="similarity">
    <text evidence="1">Belongs to the DNA mismatch repair MutS family. MutS2 subfamily.</text>
</comment>
<sequence>MNKKILETLEFDKVKALFEPHLLTEQGLEQLRQLAPTAKADKIKQAFAEMKEMQALFVEQPHFTILSTKEIAGVCKRLEMRADLNIEEFLLLKRVLLASRELQNFYANLENVSLEELALWFEKLHDFPQLQGNLQAFNDAGFIENFASEELARIRRKIHDSESQVRDVLQDLLKQKAQMLTEGIVASRNGRQVLPVKNTYRNKIAGVVHDISASGNTVYIEPREVVKLSEEIASLRADERYEMLRILQEISERVRPHAAEIANDAWIIGHLDLIRAKVRFIQERQAVVPQLSENQEIQLLHVCHPLVKNAVANDVYFGQDLTAIVITGPNTGGKTIMLKTLGLTQVMAQSGLPILADKGSRVGIFEEIFADIGDEQSIEQSLSTFSSHMTNIVDILGKVNQHSLLLLDELGAGTDPQEGAALAMAILEDLRLRQIKTMATTHYPELKAYGIETAFVQNASMEFDTATLRPTYRFMQGVPGRSNAFEIAKRLGLSEVIVGDASQQIDQDNDVNRIIEQLEEQTLESRKRLDNIREVEQENLKMNRALKKLYNELNREKETELNKAREQAAEIVDMALSESDQILKNLHSKSQLKPHEIIEAKAKLKKLAPEKVDLSKNKVLQKAKKKRAPKVGDDIVVLSYGQRGTLTSQLKDGRWEAQVGLIKMTLEEKEFDLVQAQQEKPVKKKQVNVVKRTSGRGPQARLDLRGKRYEEAMNELDTFIDQALLNNMAQVDIIHGIGTGVIREGVTKYLQRNKHVKSFGYAPQNAGGSGATIVTFKG</sequence>
<feature type="chain" id="PRO_1000118568" description="Endonuclease MutS2">
    <location>
        <begin position="1"/>
        <end position="778"/>
    </location>
</feature>
<feature type="domain" description="Smr" evidence="1">
    <location>
        <begin position="702"/>
        <end position="777"/>
    </location>
</feature>
<feature type="binding site" evidence="1">
    <location>
        <begin position="328"/>
        <end position="335"/>
    </location>
    <ligand>
        <name>ATP</name>
        <dbReference type="ChEBI" id="CHEBI:30616"/>
    </ligand>
</feature>
<keyword id="KW-0067">ATP-binding</keyword>
<keyword id="KW-0238">DNA-binding</keyword>
<keyword id="KW-0255">Endonuclease</keyword>
<keyword id="KW-0378">Hydrolase</keyword>
<keyword id="KW-0540">Nuclease</keyword>
<keyword id="KW-0547">Nucleotide-binding</keyword>
<keyword id="KW-0694">RNA-binding</keyword>
<keyword id="KW-0699">rRNA-binding</keyword>